<dbReference type="EC" id="2.7.7.72" evidence="3 8"/>
<dbReference type="EMBL" id="U66004">
    <property type="protein sequence ID" value="AAB53697.2"/>
    <property type="molecule type" value="Genomic_DNA"/>
</dbReference>
<dbReference type="EMBL" id="CP077717">
    <property type="protein sequence ID" value="QXJ29574.1"/>
    <property type="molecule type" value="Genomic_DNA"/>
</dbReference>
<dbReference type="PIR" id="A59397">
    <property type="entry name" value="T48856"/>
</dbReference>
<dbReference type="RefSeq" id="WP_218266277.1">
    <property type="nucleotide sequence ID" value="NZ_CP077717.1"/>
</dbReference>
<dbReference type="SMR" id="P77978"/>
<dbReference type="GeneID" id="65563921"/>
<dbReference type="KEGG" id="sshi:J5U23_02444"/>
<dbReference type="OrthoDB" id="7378at2157"/>
<dbReference type="BRENDA" id="2.7.7.72">
    <property type="organism ID" value="6162"/>
</dbReference>
<dbReference type="SABIO-RK" id="P77978"/>
<dbReference type="Proteomes" id="UP000694018">
    <property type="component" value="Chromosome"/>
</dbReference>
<dbReference type="GO" id="GO:0005524">
    <property type="term" value="F:ATP binding"/>
    <property type="evidence" value="ECO:0007669"/>
    <property type="project" value="UniProtKB-UniRule"/>
</dbReference>
<dbReference type="GO" id="GO:0004810">
    <property type="term" value="F:CCA tRNA nucleotidyltransferase activity"/>
    <property type="evidence" value="ECO:0007669"/>
    <property type="project" value="UniProtKB-UniRule"/>
</dbReference>
<dbReference type="GO" id="GO:0160016">
    <property type="term" value="F:CCACCA tRNA nucleotidyltransferase activity"/>
    <property type="evidence" value="ECO:0000314"/>
    <property type="project" value="UniProtKB"/>
</dbReference>
<dbReference type="GO" id="GO:0000287">
    <property type="term" value="F:magnesium ion binding"/>
    <property type="evidence" value="ECO:0007669"/>
    <property type="project" value="UniProtKB-UniRule"/>
</dbReference>
<dbReference type="GO" id="GO:0000049">
    <property type="term" value="F:tRNA binding"/>
    <property type="evidence" value="ECO:0007669"/>
    <property type="project" value="UniProtKB-UniRule"/>
</dbReference>
<dbReference type="GO" id="GO:0042245">
    <property type="term" value="P:RNA repair"/>
    <property type="evidence" value="ECO:0007669"/>
    <property type="project" value="UniProtKB-KW"/>
</dbReference>
<dbReference type="GO" id="GO:0001680">
    <property type="term" value="P:tRNA 3'-terminal CCA addition"/>
    <property type="evidence" value="ECO:0007669"/>
    <property type="project" value="UniProtKB-UniRule"/>
</dbReference>
<dbReference type="GO" id="GO:0106354">
    <property type="term" value="P:tRNA surveillance"/>
    <property type="evidence" value="ECO:0000314"/>
    <property type="project" value="UniProtKB"/>
</dbReference>
<dbReference type="CDD" id="cd05400">
    <property type="entry name" value="NT_2-5OAS_ClassI-CCAase"/>
    <property type="match status" value="1"/>
</dbReference>
<dbReference type="Gene3D" id="3.30.460.10">
    <property type="entry name" value="Beta Polymerase, domain 2"/>
    <property type="match status" value="1"/>
</dbReference>
<dbReference type="Gene3D" id="1.10.1410.30">
    <property type="entry name" value="CCA tRNA nucleotidyltransferase, domain 2"/>
    <property type="match status" value="1"/>
</dbReference>
<dbReference type="Gene3D" id="3.30.70.590">
    <property type="entry name" value="Poly(A) polymerase predicted RNA binding domain"/>
    <property type="match status" value="1"/>
</dbReference>
<dbReference type="HAMAP" id="MF_01264">
    <property type="entry name" value="CCA_arch"/>
    <property type="match status" value="1"/>
</dbReference>
<dbReference type="InterPro" id="IPR048833">
    <property type="entry name" value="CAA_C"/>
</dbReference>
<dbReference type="InterPro" id="IPR008229">
    <property type="entry name" value="CCA-adding_arc"/>
</dbReference>
<dbReference type="InterPro" id="IPR042090">
    <property type="entry name" value="CCA_tRNA_nucleotrans_2"/>
</dbReference>
<dbReference type="InterPro" id="IPR006116">
    <property type="entry name" value="NT_2-5OAS_ClassI-CCAase"/>
</dbReference>
<dbReference type="InterPro" id="IPR043519">
    <property type="entry name" value="NT_sf"/>
</dbReference>
<dbReference type="InterPro" id="IPR011068">
    <property type="entry name" value="NuclTrfase_I-like_C"/>
</dbReference>
<dbReference type="InterPro" id="IPR002934">
    <property type="entry name" value="Polymerase_NTP_transf_dom"/>
</dbReference>
<dbReference type="InterPro" id="IPR015329">
    <property type="entry name" value="tRNA_NucTransf2"/>
</dbReference>
<dbReference type="NCBIfam" id="TIGR03671">
    <property type="entry name" value="cca_archaeal"/>
    <property type="match status" value="1"/>
</dbReference>
<dbReference type="PANTHER" id="PTHR39643">
    <property type="entry name" value="CCA-ADDING ENZYME"/>
    <property type="match status" value="1"/>
</dbReference>
<dbReference type="PANTHER" id="PTHR39643:SF1">
    <property type="entry name" value="CCA-ADDING ENZYME"/>
    <property type="match status" value="1"/>
</dbReference>
<dbReference type="Pfam" id="PF21133">
    <property type="entry name" value="CAA_C"/>
    <property type="match status" value="1"/>
</dbReference>
<dbReference type="Pfam" id="PF01909">
    <property type="entry name" value="NTP_transf_2"/>
    <property type="match status" value="1"/>
</dbReference>
<dbReference type="Pfam" id="PF09249">
    <property type="entry name" value="tRNA_NucTransf2"/>
    <property type="match status" value="1"/>
</dbReference>
<dbReference type="PIRSF" id="PIRSF005335">
    <property type="entry name" value="CCA_arch"/>
    <property type="match status" value="1"/>
</dbReference>
<dbReference type="SUPFAM" id="SSF81301">
    <property type="entry name" value="Nucleotidyltransferase"/>
    <property type="match status" value="1"/>
</dbReference>
<dbReference type="SUPFAM" id="SSF55003">
    <property type="entry name" value="PAP/Archaeal CCA-adding enzyme, C-terminal domain"/>
    <property type="match status" value="1"/>
</dbReference>
<dbReference type="SUPFAM" id="SSF81631">
    <property type="entry name" value="PAP/OAS1 substrate-binding domain"/>
    <property type="match status" value="1"/>
</dbReference>
<gene>
    <name evidence="3" type="primary">cca</name>
    <name evidence="11" type="ORF">J5U23_02444</name>
</gene>
<sequence length="412" mass="47848">MIEEEVLKIIKPTEEDKKGIEKVLEIIRERLNKLDFEVEGSFRKGTWLRQDTDVDVFVFYPKDVGKEYLERNALNDIINRIKDLDYTLAYAEHPYVIVNINNVEVDIVPALRVESGDRAITAVDRTPFHTKYVTSHLDERGKDEVRLLKRFMKGIGVYGAELKVQGFSGYATELLVIYYGSFRKVLEAASKWKHPIKIELTKPMRAFSEPLIIPDPVDPRRNVTAAVSLKNIATFSVAAKYYLKNPSMEFFFPSKKVEEKIKGDVLILRLNLDEKSSEDIIWGQIKRSVNKIERALKQSGFRVIDIQAWGDTSNIVIAVQLESKNIGQYYLNIGPQYYSETIDDFIQKNDNIWVGEDGRLYSIKERKEYNAEAIAKKNIVLKVKYNIESYWLQNTEDQQIMKFLRKTPTWLK</sequence>
<keyword id="KW-0067">ATP-binding</keyword>
<keyword id="KW-0460">Magnesium</keyword>
<keyword id="KW-0479">Metal-binding</keyword>
<keyword id="KW-0547">Nucleotide-binding</keyword>
<keyword id="KW-0548">Nucleotidyltransferase</keyword>
<keyword id="KW-0692">RNA repair</keyword>
<keyword id="KW-0694">RNA-binding</keyword>
<keyword id="KW-0808">Transferase</keyword>
<keyword id="KW-0819">tRNA processing</keyword>
<organism>
    <name type="scientific">Saccharolobus shibatae (strain ATCC 51178 / DSM 5389 / JCM 8931 / NBRC 15437 / B12)</name>
    <name type="common">Sulfolobus shibatae</name>
    <dbReference type="NCBI Taxonomy" id="523848"/>
    <lineage>
        <taxon>Archaea</taxon>
        <taxon>Thermoproteota</taxon>
        <taxon>Thermoprotei</taxon>
        <taxon>Sulfolobales</taxon>
        <taxon>Sulfolobaceae</taxon>
        <taxon>Saccharolobus</taxon>
    </lineage>
</organism>
<evidence type="ECO:0000250" key="1">
    <source>
        <dbReference type="UniProtKB" id="O28126"/>
    </source>
</evidence>
<evidence type="ECO:0000250" key="2">
    <source>
        <dbReference type="UniProtKB" id="O66728"/>
    </source>
</evidence>
<evidence type="ECO:0000255" key="3">
    <source>
        <dbReference type="HAMAP-Rule" id="MF_01264"/>
    </source>
</evidence>
<evidence type="ECO:0000269" key="4">
    <source>
    </source>
</evidence>
<evidence type="ECO:0000269" key="5">
    <source>
    </source>
</evidence>
<evidence type="ECO:0000269" key="6">
    <source>
    </source>
</evidence>
<evidence type="ECO:0000269" key="7">
    <source>
    </source>
</evidence>
<evidence type="ECO:0000269" key="8">
    <source>
    </source>
</evidence>
<evidence type="ECO:0000269" key="9">
    <source>
    </source>
</evidence>
<evidence type="ECO:0000305" key="10"/>
<evidence type="ECO:0000312" key="11">
    <source>
        <dbReference type="EMBL" id="QXJ29574.1"/>
    </source>
</evidence>
<proteinExistence type="evidence at protein level"/>
<reference key="1">
    <citation type="journal article" date="1996" name="RNA">
        <title>CCA-adding enzymes and poly(A) polymerases are all members of the same nucleotidyltransferase superfamily: characterization of the CCA-adding enzyme from the archaeal hyperthermophile Sulfolobus shibatae.</title>
        <authorList>
            <person name="Yue D."/>
            <person name="Maizels N."/>
            <person name="Weiner A.M."/>
        </authorList>
    </citation>
    <scope>NUCLEOTIDE SEQUENCE [GENOMIC DNA]</scope>
    <scope>FUNCTION</scope>
    <scope>CATALYTIC ACTIVITY</scope>
    <scope>BIOPHYSICOCHEMICAL PROPERTIES</scope>
</reference>
<reference key="2">
    <citation type="submission" date="2001-11" db="EMBL/GenBank/DDBJ databases">
        <authorList>
            <person name="Cho H.D."/>
            <person name="Weiner A.M."/>
        </authorList>
    </citation>
    <scope>SEQUENCE REVISION TO 349-363</scope>
</reference>
<reference evidence="11" key="3">
    <citation type="journal article" date="2021" name="Environ. Microbiol.">
        <title>New insights into the diversity and evolution of the archaeal mobilome from three complete genomes of Saccharolobus shibatae.</title>
        <authorList>
            <person name="Medvedeva S."/>
            <person name="Brandt D."/>
            <person name="Cvirkaite-Krupovic V."/>
            <person name="Liu Y."/>
            <person name="Severinov K."/>
            <person name="Ishino S."/>
            <person name="Ishino Y."/>
            <person name="Prangishvili D."/>
            <person name="Kalinowski J."/>
            <person name="Krupovic M."/>
        </authorList>
    </citation>
    <scope>NUCLEOTIDE SEQUENCE [LARGE SCALE GENOMIC DNA]</scope>
    <source>
        <strain>ATCC 51178 / DSM 5389 / JCM 8931 / NBRC 15437 / B12</strain>
    </source>
</reference>
<reference key="4">
    <citation type="journal article" date="1998" name="J. Biol. Chem.">
        <title>The CCA-adding enzyme has a single active site.</title>
        <authorList>
            <person name="Yue D."/>
            <person name="Weiner A.M."/>
            <person name="Maizels N."/>
        </authorList>
    </citation>
    <scope>MUTAGENESIS OF ASP-53; ASP-55; ASP-106; GLU-173 AND ASP-215</scope>
</reference>
<reference key="5">
    <citation type="journal article" date="2000" name="J. Mol. Biol.">
        <title>Sulfolobus shibatae CCA-adding enzyme forms a tetramer upon binding two tRNA molecules: a scrunching-shuttling model of CCA specificity.</title>
        <authorList>
            <person name="Li F."/>
            <person name="Wang J."/>
            <person name="Steitz T.A."/>
        </authorList>
    </citation>
    <scope>SUBUNIT</scope>
</reference>
<reference key="6">
    <citation type="journal article" date="2004" name="J. Biol. Chem.">
        <title>A single catalytically active subunit in the multimeric Sulfolobus shibatae CCA-adding enzyme can carry out all three steps of CCA addition.</title>
        <authorList>
            <person name="Cho H.D."/>
            <person name="Weiner A.M."/>
        </authorList>
    </citation>
    <scope>MECHANISM</scope>
</reference>
<reference key="7">
    <citation type="journal article" date="2011" name="Science">
        <title>tRNAs marked with CCACCA are targeted for degradation.</title>
        <authorList>
            <person name="Wilusz J.E."/>
            <person name="Whipple J.M."/>
            <person name="Phizicky E.M."/>
            <person name="Sharp P.A."/>
        </authorList>
    </citation>
    <scope>FUNCTION</scope>
    <scope>CATALYTIC ACTIVITY</scope>
</reference>
<reference key="8">
    <citation type="journal article" date="2005" name="J. Biol. Chem.">
        <title>Archaeal CCA-adding enzymes: central role of a highly conserved beta-turn motif in RNA polymerization without translocation.</title>
        <authorList>
            <person name="Cho H.D."/>
            <person name="Verlinde C.L."/>
            <person name="Weiner A.M."/>
        </authorList>
    </citation>
    <scope>3D-STRUCTURE MODELING</scope>
    <scope>MUTAGENESIS OF HIS-93; TYR-95; HIS-129 AND ARG-221</scope>
</reference>
<comment type="function">
    <text evidence="1 7 8">Catalyzes the addition and repair of the essential 3'-terminal CCA sequence in tRNAs without using a nucleic acid template (PubMed:8809016). Adds these three nucleotides in the order of C, C, and A to the tRNA nucleotide-73, using CTP and ATP as substrates and producing inorganic pyrophosphate (PubMed:8809016). tRNA 3'-terminal CCA addition is required both for tRNA processing and repair (PubMed:22076379). Also involved in tRNA surveillance by mediating tandem CCA addition to generate a CCACCA at the 3' terminus of unstable tRNAs (PubMed:22076379). While stable tRNAs receive only 3'-terminal CCA, unstable tRNAs are marked with CCACCA and rapidly degraded (PubMed:22076379). The structural flexibility of RNA controls the choice between CCA versus CCACCA addition: following the first CCA addition cycle, nucleotide-binding to the active site triggers a clockwise screw motion, producing torque on the RNA (By similarity). This ejects stable RNAs, whereas unstable RNAs are refolded while bound to the enzyme and subjected to a second CCA catalytic cycle (By similarity).</text>
</comment>
<comment type="catalytic activity">
    <reaction evidence="8">
        <text>a tRNA precursor + 2 CTP + ATP = a tRNA with a 3' CCA end + 3 diphosphate</text>
        <dbReference type="Rhea" id="RHEA:14433"/>
        <dbReference type="Rhea" id="RHEA-COMP:10465"/>
        <dbReference type="Rhea" id="RHEA-COMP:10468"/>
        <dbReference type="ChEBI" id="CHEBI:30616"/>
        <dbReference type="ChEBI" id="CHEBI:33019"/>
        <dbReference type="ChEBI" id="CHEBI:37563"/>
        <dbReference type="ChEBI" id="CHEBI:74896"/>
        <dbReference type="ChEBI" id="CHEBI:83071"/>
        <dbReference type="EC" id="2.7.7.72"/>
    </reaction>
</comment>
<comment type="catalytic activity">
    <reaction evidence="7">
        <text>a tRNA with a 3' CCA end + 2 CTP + ATP = a tRNA with a 3' CCACCA end + 3 diphosphate</text>
        <dbReference type="Rhea" id="RHEA:76235"/>
        <dbReference type="Rhea" id="RHEA-COMP:10468"/>
        <dbReference type="Rhea" id="RHEA-COMP:18655"/>
        <dbReference type="ChEBI" id="CHEBI:30616"/>
        <dbReference type="ChEBI" id="CHEBI:33019"/>
        <dbReference type="ChEBI" id="CHEBI:37563"/>
        <dbReference type="ChEBI" id="CHEBI:83071"/>
        <dbReference type="ChEBI" id="CHEBI:195187"/>
    </reaction>
    <physiologicalReaction direction="left-to-right" evidence="7">
        <dbReference type="Rhea" id="RHEA:76236"/>
    </physiologicalReaction>
</comment>
<comment type="cofactor">
    <cofactor evidence="2">
        <name>Mg(2+)</name>
        <dbReference type="ChEBI" id="CHEBI:18420"/>
    </cofactor>
</comment>
<comment type="biophysicochemical properties">
    <kinetics>
        <KM evidence="8">30 uM for CTP</KM>
        <text>The KM for ATP is much higher than 30 uM.</text>
    </kinetics>
    <phDependence>
        <text evidence="8">Optimum pH is about 9. Active from pH 7 to 10.</text>
    </phDependence>
    <temperatureDependence>
        <text evidence="8">Optimum temperature is 70 degrees Celsius. Inactive at 37 degrees Celsius.</text>
    </temperatureDependence>
</comment>
<comment type="subunit">
    <text evidence="4">Homodimer. Forms a tetramer upon binding two tRNAs. However, tRNA-induced tetramer formation is not required for CCA addition.</text>
</comment>
<comment type="miscellaneous">
    <text evidence="3 5">A single active site specifically recognizes both ATP and CTP and is responsible for their addition.</text>
</comment>
<comment type="similarity">
    <text evidence="3 10">Belongs to the tRNA nucleotidyltransferase/poly(A) polymerase family. Archaeal CCA-adding enzyme subfamily.</text>
</comment>
<accession>P77978</accession>
<accession>A0A8F5BQQ0</accession>
<feature type="chain" id="PRO_0000139082" description="CCA-adding enzyme">
    <location>
        <begin position="1"/>
        <end position="412"/>
    </location>
</feature>
<feature type="binding site" evidence="3">
    <location>
        <position position="41"/>
    </location>
    <ligand>
        <name>ATP</name>
        <dbReference type="ChEBI" id="CHEBI:30616"/>
    </ligand>
</feature>
<feature type="binding site" evidence="3">
    <location>
        <position position="41"/>
    </location>
    <ligand>
        <name>CTP</name>
        <dbReference type="ChEBI" id="CHEBI:37563"/>
    </ligand>
</feature>
<feature type="binding site" evidence="3">
    <location>
        <position position="44"/>
    </location>
    <ligand>
        <name>ATP</name>
        <dbReference type="ChEBI" id="CHEBI:30616"/>
    </ligand>
</feature>
<feature type="binding site" evidence="3">
    <location>
        <position position="44"/>
    </location>
    <ligand>
        <name>CTP</name>
        <dbReference type="ChEBI" id="CHEBI:37563"/>
    </ligand>
</feature>
<feature type="binding site" evidence="3">
    <location>
        <position position="53"/>
    </location>
    <ligand>
        <name>Mg(2+)</name>
        <dbReference type="ChEBI" id="CHEBI:18420"/>
    </ligand>
</feature>
<feature type="binding site" evidence="3">
    <location>
        <position position="55"/>
    </location>
    <ligand>
        <name>Mg(2+)</name>
        <dbReference type="ChEBI" id="CHEBI:18420"/>
    </ligand>
</feature>
<feature type="binding site" evidence="3">
    <location>
        <position position="106"/>
    </location>
    <ligand>
        <name>Mg(2+)</name>
        <dbReference type="ChEBI" id="CHEBI:18420"/>
    </ligand>
</feature>
<feature type="binding site" evidence="3">
    <location>
        <position position="129"/>
    </location>
    <ligand>
        <name>ATP</name>
        <dbReference type="ChEBI" id="CHEBI:30616"/>
    </ligand>
</feature>
<feature type="binding site" evidence="3">
    <location>
        <position position="129"/>
    </location>
    <ligand>
        <name>CTP</name>
        <dbReference type="ChEBI" id="CHEBI:37563"/>
    </ligand>
</feature>
<feature type="binding site" evidence="3">
    <location>
        <position position="149"/>
    </location>
    <ligand>
        <name>ATP</name>
        <dbReference type="ChEBI" id="CHEBI:30616"/>
    </ligand>
</feature>
<feature type="binding site" evidence="3">
    <location>
        <position position="149"/>
    </location>
    <ligand>
        <name>CTP</name>
        <dbReference type="ChEBI" id="CHEBI:37563"/>
    </ligand>
</feature>
<feature type="binding site" evidence="3">
    <location>
        <position position="158"/>
    </location>
    <ligand>
        <name>ATP</name>
        <dbReference type="ChEBI" id="CHEBI:30616"/>
    </ligand>
</feature>
<feature type="binding site" evidence="3">
    <location>
        <position position="158"/>
    </location>
    <ligand>
        <name>CTP</name>
        <dbReference type="ChEBI" id="CHEBI:37563"/>
    </ligand>
</feature>
<feature type="mutagenesis site" description="Loss of both AMP and CMP incorporation." evidence="9">
    <original>D</original>
    <variation>A</variation>
    <location>
        <position position="53"/>
    </location>
</feature>
<feature type="mutagenesis site" description="Loss of both AMP and CMP incorporation." evidence="9">
    <original>D</original>
    <variation>A</variation>
    <variation>E</variation>
    <location>
        <position position="55"/>
    </location>
</feature>
<feature type="mutagenesis site" description="Loss of AMP incorporation but no loss of CMP incorporation." evidence="6">
    <original>H</original>
    <variation>V</variation>
    <location>
        <position position="93"/>
    </location>
</feature>
<feature type="mutagenesis site" description="Adds C75 and A76 but not C74." evidence="6">
    <original>Y</original>
    <variation>V</variation>
    <location>
        <position position="95"/>
    </location>
</feature>
<feature type="mutagenesis site" description="High decrease in AMP incorporation but not in CMP incorporation." evidence="9">
    <original>D</original>
    <variation>A</variation>
    <location>
        <position position="106"/>
    </location>
</feature>
<feature type="mutagenesis site" description="Loss of CMP incorporation but no loss of AMP incorporation." evidence="6">
    <original>H</original>
    <variation>V</variation>
    <location>
        <position position="129"/>
    </location>
</feature>
<feature type="mutagenesis site" description="High decrease in both AMP and CMP incorporation." evidence="9">
    <original>E</original>
    <variation>A</variation>
    <location>
        <position position="173"/>
    </location>
</feature>
<feature type="mutagenesis site" description="High decrease in both AMP and CMP incorporation." evidence="9">
    <original>D</original>
    <variation>A</variation>
    <location>
        <position position="215"/>
    </location>
</feature>
<feature type="mutagenesis site" description="High decrease in both AMP and CMP incorporation." evidence="6">
    <original>R</original>
    <variation>A</variation>
    <variation>E</variation>
    <location>
        <position position="221"/>
    </location>
</feature>
<protein>
    <recommendedName>
        <fullName evidence="3">CCA-adding enzyme</fullName>
        <ecNumber evidence="3 8">2.7.7.72</ecNumber>
    </recommendedName>
    <alternativeName>
        <fullName evidence="3">CCA tRNA nucleotidyltransferase</fullName>
    </alternativeName>
    <alternativeName>
        <fullName evidence="3">tRNA CCA-pyrophosphorylase</fullName>
    </alternativeName>
    <alternativeName>
        <fullName evidence="3">tRNA adenylyl-/cytidylyl- transferase</fullName>
    </alternativeName>
    <alternativeName>
        <fullName evidence="3">tRNA nucleotidyltransferase</fullName>
    </alternativeName>
    <alternativeName>
        <fullName evidence="3">tRNA-NT</fullName>
    </alternativeName>
</protein>
<name>CCA_SACSH</name>